<reference key="1">
    <citation type="journal article" date="2004" name="Science">
        <title>The 1.2-megabase genome sequence of Mimivirus.</title>
        <authorList>
            <person name="Raoult D."/>
            <person name="Audic S."/>
            <person name="Robert C."/>
            <person name="Abergel C."/>
            <person name="Renesto P."/>
            <person name="Ogata H."/>
            <person name="La Scola B."/>
            <person name="Susan M."/>
            <person name="Claverie J.-M."/>
        </authorList>
    </citation>
    <scope>NUCLEOTIDE SEQUENCE [LARGE SCALE GENOMIC DNA]</scope>
    <source>
        <strain>Rowbotham-Bradford</strain>
    </source>
</reference>
<reference key="2">
    <citation type="journal article" date="2006" name="J. Virol.">
        <title>Mimivirus giant particles incorporate a large fraction of anonymous and unique gene products.</title>
        <authorList>
            <person name="Renesto P."/>
            <person name="Abergel C."/>
            <person name="Decloquement P."/>
            <person name="Moinier D."/>
            <person name="Azza S."/>
            <person name="Ogata H."/>
            <person name="Fourquet P."/>
            <person name="Gorvel J.-P."/>
            <person name="Claverie J.-M."/>
            <person name="Raoult D."/>
        </authorList>
    </citation>
    <scope>IDENTIFICATION BY MASS SPECTROMETRY [LARGE SCALE ANALYSIS]</scope>
    <scope>SUBCELLULAR LOCATION</scope>
</reference>
<sequence>MNQSINFPNNLQNNSNINNALKYLTKIIPNNKYPQQNQSHNNTTPVVTNAINPIEKLNVEEITYLQKYLENIKNKKLNLNKQSNNQTNNQTNNQTNNQTNNQTNNIRPQINNNKQPISKIQTNRTNEIYDPLKREMPIDWRILPANSLNNFRNNAFDANVFEPGSRGATSTRIGKKAQFNNPYDYGSKQNSFENVFQKPCNDPYVYDNNMLNQLNINEVPNNLRPNDLRNVDVESSLLQRESVHLPGQRNISEREFNRWNMLPFDPQDHRHIVWEDNMPRGGYATRAERLDDN</sequence>
<organism>
    <name type="scientific">Acanthamoeba polyphaga mimivirus</name>
    <name type="common">APMV</name>
    <dbReference type="NCBI Taxonomy" id="212035"/>
    <lineage>
        <taxon>Viruses</taxon>
        <taxon>Varidnaviria</taxon>
        <taxon>Bamfordvirae</taxon>
        <taxon>Nucleocytoviricota</taxon>
        <taxon>Megaviricetes</taxon>
        <taxon>Imitervirales</taxon>
        <taxon>Mimiviridae</taxon>
        <taxon>Megamimivirinae</taxon>
        <taxon>Mimivirus</taxon>
        <taxon>Mimivirus bradfordmassiliense</taxon>
    </lineage>
</organism>
<dbReference type="EMBL" id="AY653733">
    <property type="protein sequence ID" value="AAV50729.1"/>
    <property type="molecule type" value="Genomic_DNA"/>
</dbReference>
<dbReference type="SMR" id="Q5UQD8"/>
<dbReference type="KEGG" id="vg:9925088"/>
<dbReference type="OrthoDB" id="19520at10239"/>
<dbReference type="Proteomes" id="UP000001134">
    <property type="component" value="Genome"/>
</dbReference>
<dbReference type="GO" id="GO:0044423">
    <property type="term" value="C:virion component"/>
    <property type="evidence" value="ECO:0007669"/>
    <property type="project" value="UniProtKB-KW"/>
</dbReference>
<protein>
    <recommendedName>
        <fullName>Uncharacterized protein R463</fullName>
    </recommendedName>
</protein>
<name>YR463_MIMIV</name>
<accession>Q5UQD8</accession>
<comment type="subcellular location">
    <subcellularLocation>
        <location evidence="3">Virion</location>
    </subcellularLocation>
</comment>
<keyword id="KW-0175">Coiled coil</keyword>
<keyword id="KW-1185">Reference proteome</keyword>
<keyword id="KW-0946">Virion</keyword>
<proteinExistence type="evidence at protein level"/>
<evidence type="ECO:0000255" key="1"/>
<evidence type="ECO:0000256" key="2">
    <source>
        <dbReference type="SAM" id="MobiDB-lite"/>
    </source>
</evidence>
<evidence type="ECO:0000269" key="3">
    <source>
    </source>
</evidence>
<organismHost>
    <name type="scientific">Acanthamoeba polyphaga</name>
    <name type="common">Amoeba</name>
    <dbReference type="NCBI Taxonomy" id="5757"/>
</organismHost>
<feature type="chain" id="PRO_0000253451" description="Uncharacterized protein R463">
    <location>
        <begin position="1"/>
        <end position="293"/>
    </location>
</feature>
<feature type="region of interest" description="Disordered" evidence="2">
    <location>
        <begin position="81"/>
        <end position="112"/>
    </location>
</feature>
<feature type="coiled-coil region" evidence="1">
    <location>
        <begin position="65"/>
        <end position="89"/>
    </location>
</feature>
<gene>
    <name type="ordered locus">MIMI_R463</name>
</gene>